<dbReference type="EC" id="2.3.1.24" evidence="1"/>
<dbReference type="EC" id="2.3.1.298" evidence="7"/>
<dbReference type="EC" id="2.3.1.297" evidence="6 7 9"/>
<dbReference type="EMBL" id="AC015723">
    <property type="status" value="NOT_ANNOTATED_CDS"/>
    <property type="molecule type" value="Genomic_DNA"/>
</dbReference>
<dbReference type="EMBL" id="AC027020">
    <property type="status" value="NOT_ANNOTATED_CDS"/>
    <property type="molecule type" value="Genomic_DNA"/>
</dbReference>
<dbReference type="EMBL" id="BC028703">
    <property type="protein sequence ID" value="AAH28703.1"/>
    <property type="molecule type" value="mRNA"/>
</dbReference>
<dbReference type="EMBL" id="BC034500">
    <property type="protein sequence ID" value="AAH34500.1"/>
    <property type="molecule type" value="mRNA"/>
</dbReference>
<dbReference type="EMBL" id="BC034970">
    <property type="protein sequence ID" value="AAH34970.1"/>
    <property type="molecule type" value="mRNA"/>
</dbReference>
<dbReference type="CCDS" id="CCDS10384.1"/>
<dbReference type="RefSeq" id="NP_001277270.1">
    <property type="nucleotide sequence ID" value="NM_001290341.2"/>
</dbReference>
<dbReference type="RefSeq" id="NP_001277271.1">
    <property type="nucleotide sequence ID" value="NM_001290342.2"/>
</dbReference>
<dbReference type="RefSeq" id="NP_001277272.1">
    <property type="nucleotide sequence ID" value="NM_001290343.2"/>
</dbReference>
<dbReference type="RefSeq" id="NP_001365718.1">
    <property type="nucleotide sequence ID" value="NM_001378789.1"/>
</dbReference>
<dbReference type="RefSeq" id="NP_849164.2">
    <property type="nucleotide sequence ID" value="NM_178842.5"/>
</dbReference>
<dbReference type="RefSeq" id="XP_016877492.1">
    <property type="nucleotide sequence ID" value="XM_017022003.1"/>
</dbReference>
<dbReference type="RefSeq" id="XP_016877493.1">
    <property type="nucleotide sequence ID" value="XM_017022004.2"/>
</dbReference>
<dbReference type="SMR" id="Q8IU89"/>
<dbReference type="BioGRID" id="128485">
    <property type="interactions" value="72"/>
</dbReference>
<dbReference type="FunCoup" id="Q8IU89">
    <property type="interactions" value="370"/>
</dbReference>
<dbReference type="IntAct" id="Q8IU89">
    <property type="interactions" value="58"/>
</dbReference>
<dbReference type="STRING" id="9606.ENSP00000284382"/>
<dbReference type="SwissLipids" id="SLP:000000259"/>
<dbReference type="GlyGen" id="Q8IU89">
    <property type="glycosylation" value="1 site, 1 N-linked glycan (1 site)"/>
</dbReference>
<dbReference type="iPTMnet" id="Q8IU89"/>
<dbReference type="PhosphoSitePlus" id="Q8IU89"/>
<dbReference type="BioMuta" id="CERS3"/>
<dbReference type="DMDM" id="322510043"/>
<dbReference type="jPOST" id="Q8IU89"/>
<dbReference type="MassIVE" id="Q8IU89"/>
<dbReference type="PaxDb" id="9606-ENSP00000284382"/>
<dbReference type="PeptideAtlas" id="Q8IU89"/>
<dbReference type="ProteomicsDB" id="70524"/>
<dbReference type="Antibodypedia" id="1805">
    <property type="antibodies" value="148 antibodies from 29 providers"/>
</dbReference>
<dbReference type="DNASU" id="204219"/>
<dbReference type="Ensembl" id="ENST00000284382.8">
    <property type="protein sequence ID" value="ENSP00000284382.4"/>
    <property type="gene ID" value="ENSG00000154227.14"/>
</dbReference>
<dbReference type="Ensembl" id="ENST00000394113.5">
    <property type="protein sequence ID" value="ENSP00000377672.3"/>
    <property type="gene ID" value="ENSG00000154227.14"/>
</dbReference>
<dbReference type="Ensembl" id="ENST00000538112.6">
    <property type="protein sequence ID" value="ENSP00000437640.2"/>
    <property type="gene ID" value="ENSG00000154227.14"/>
</dbReference>
<dbReference type="Ensembl" id="ENST00000679737.1">
    <property type="protein sequence ID" value="ENSP00000506641.1"/>
    <property type="gene ID" value="ENSG00000154227.14"/>
</dbReference>
<dbReference type="GeneID" id="204219"/>
<dbReference type="KEGG" id="hsa:204219"/>
<dbReference type="MANE-Select" id="ENST00000679737.1">
    <property type="protein sequence ID" value="ENSP00000506641.1"/>
    <property type="RefSeq nucleotide sequence ID" value="NM_001378789.1"/>
    <property type="RefSeq protein sequence ID" value="NP_001365718.1"/>
</dbReference>
<dbReference type="UCSC" id="uc002bvz.4">
    <property type="organism name" value="human"/>
</dbReference>
<dbReference type="AGR" id="HGNC:23752"/>
<dbReference type="CTD" id="204219"/>
<dbReference type="DisGeNET" id="204219"/>
<dbReference type="GeneCards" id="CERS3"/>
<dbReference type="GeneReviews" id="CERS3"/>
<dbReference type="HGNC" id="HGNC:23752">
    <property type="gene designation" value="CERS3"/>
</dbReference>
<dbReference type="HPA" id="ENSG00000154227">
    <property type="expression patterns" value="Tissue enhanced (esophagus, skin, vagina)"/>
</dbReference>
<dbReference type="MalaCards" id="CERS3"/>
<dbReference type="MIM" id="615023">
    <property type="type" value="phenotype"/>
</dbReference>
<dbReference type="MIM" id="615276">
    <property type="type" value="gene"/>
</dbReference>
<dbReference type="neXtProt" id="NX_Q8IU89"/>
<dbReference type="OpenTargets" id="ENSG00000154227"/>
<dbReference type="Orphanet" id="79394">
    <property type="disease" value="Congenital ichthyosiform erythroderma"/>
</dbReference>
<dbReference type="Orphanet" id="363992">
    <property type="disease" value="Ichthyosis-short stature-brachydactyly-microspherophakia syndrome"/>
</dbReference>
<dbReference type="PharmGKB" id="PA134873153"/>
<dbReference type="VEuPathDB" id="HostDB:ENSG00000154227"/>
<dbReference type="eggNOG" id="KOG1607">
    <property type="taxonomic scope" value="Eukaryota"/>
</dbReference>
<dbReference type="GeneTree" id="ENSGT01030000234515"/>
<dbReference type="HOGENOM" id="CLU_028277_1_1_1"/>
<dbReference type="InParanoid" id="Q8IU89"/>
<dbReference type="OMA" id="DHDGLIF"/>
<dbReference type="OrthoDB" id="537032at2759"/>
<dbReference type="PAN-GO" id="Q8IU89">
    <property type="GO annotations" value="3 GO annotations based on evolutionary models"/>
</dbReference>
<dbReference type="PhylomeDB" id="Q8IU89"/>
<dbReference type="TreeFam" id="TF314319"/>
<dbReference type="BioCyc" id="MetaCyc:ENSG00000154227-MONOMER"/>
<dbReference type="BRENDA" id="2.3.1.24">
    <property type="organism ID" value="2681"/>
</dbReference>
<dbReference type="BRENDA" id="2.3.1.298">
    <property type="organism ID" value="2681"/>
</dbReference>
<dbReference type="PathwayCommons" id="Q8IU89"/>
<dbReference type="Reactome" id="R-HSA-1660661">
    <property type="pathway name" value="Sphingolipid de novo biosynthesis"/>
</dbReference>
<dbReference type="SignaLink" id="Q8IU89"/>
<dbReference type="SIGNOR" id="Q8IU89"/>
<dbReference type="UniPathway" id="UPA00222"/>
<dbReference type="BioGRID-ORCS" id="204219">
    <property type="hits" value="9 hits in 1176 CRISPR screens"/>
</dbReference>
<dbReference type="ChiTaRS" id="CERS3">
    <property type="organism name" value="human"/>
</dbReference>
<dbReference type="GenomeRNAi" id="204219"/>
<dbReference type="Pharos" id="Q8IU89">
    <property type="development level" value="Tbio"/>
</dbReference>
<dbReference type="PRO" id="PR:Q8IU89"/>
<dbReference type="Proteomes" id="UP000005640">
    <property type="component" value="Chromosome 15"/>
</dbReference>
<dbReference type="RNAct" id="Q8IU89">
    <property type="molecule type" value="protein"/>
</dbReference>
<dbReference type="Bgee" id="ENSG00000154227">
    <property type="expression patterns" value="Expressed in lower esophagus mucosa and 105 other cell types or tissues"/>
</dbReference>
<dbReference type="ExpressionAtlas" id="Q8IU89">
    <property type="expression patterns" value="baseline and differential"/>
</dbReference>
<dbReference type="GO" id="GO:0005783">
    <property type="term" value="C:endoplasmic reticulum"/>
    <property type="evidence" value="ECO:0000250"/>
    <property type="project" value="UniProtKB"/>
</dbReference>
<dbReference type="GO" id="GO:0005789">
    <property type="term" value="C:endoplasmic reticulum membrane"/>
    <property type="evidence" value="ECO:0000304"/>
    <property type="project" value="Reactome"/>
</dbReference>
<dbReference type="GO" id="GO:0003677">
    <property type="term" value="F:DNA binding"/>
    <property type="evidence" value="ECO:0007669"/>
    <property type="project" value="InterPro"/>
</dbReference>
<dbReference type="GO" id="GO:0050291">
    <property type="term" value="F:sphingosine N-acyltransferase activity"/>
    <property type="evidence" value="ECO:0000314"/>
    <property type="project" value="UniProtKB"/>
</dbReference>
<dbReference type="GO" id="GO:0046513">
    <property type="term" value="P:ceramide biosynthetic process"/>
    <property type="evidence" value="ECO:0000314"/>
    <property type="project" value="UniProtKB"/>
</dbReference>
<dbReference type="GO" id="GO:0070268">
    <property type="term" value="P:cornification"/>
    <property type="evidence" value="ECO:0000250"/>
    <property type="project" value="UniProtKB"/>
</dbReference>
<dbReference type="GO" id="GO:0008544">
    <property type="term" value="P:epidermis development"/>
    <property type="evidence" value="ECO:0000250"/>
    <property type="project" value="UniProtKB"/>
</dbReference>
<dbReference type="GO" id="GO:0030216">
    <property type="term" value="P:keratinocyte differentiation"/>
    <property type="evidence" value="ECO:0000315"/>
    <property type="project" value="UniProtKB"/>
</dbReference>
<dbReference type="GO" id="GO:0030148">
    <property type="term" value="P:sphingolipid biosynthetic process"/>
    <property type="evidence" value="ECO:0000304"/>
    <property type="project" value="Reactome"/>
</dbReference>
<dbReference type="CDD" id="cd00086">
    <property type="entry name" value="homeodomain"/>
    <property type="match status" value="1"/>
</dbReference>
<dbReference type="FunFam" id="1.10.10.60:FF:000020">
    <property type="entry name" value="Ceramide synthase 5"/>
    <property type="match status" value="1"/>
</dbReference>
<dbReference type="Gene3D" id="1.10.10.60">
    <property type="entry name" value="Homeodomain-like"/>
    <property type="match status" value="1"/>
</dbReference>
<dbReference type="InterPro" id="IPR001356">
    <property type="entry name" value="HD"/>
</dbReference>
<dbReference type="InterPro" id="IPR009057">
    <property type="entry name" value="Homeodomain-like_sf"/>
</dbReference>
<dbReference type="InterPro" id="IPR016439">
    <property type="entry name" value="Lag1/Lac1-like"/>
</dbReference>
<dbReference type="InterPro" id="IPR006634">
    <property type="entry name" value="TLC-dom"/>
</dbReference>
<dbReference type="PANTHER" id="PTHR12560:SF18">
    <property type="entry name" value="CERAMIDE SYNTHASE 3"/>
    <property type="match status" value="1"/>
</dbReference>
<dbReference type="PANTHER" id="PTHR12560">
    <property type="entry name" value="LONGEVITY ASSURANCE FACTOR 1 LAG1"/>
    <property type="match status" value="1"/>
</dbReference>
<dbReference type="Pfam" id="PF00046">
    <property type="entry name" value="Homeodomain"/>
    <property type="match status" value="1"/>
</dbReference>
<dbReference type="Pfam" id="PF03798">
    <property type="entry name" value="TRAM_LAG1_CLN8"/>
    <property type="match status" value="1"/>
</dbReference>
<dbReference type="PIRSF" id="PIRSF005225">
    <property type="entry name" value="LAG1_LAC1"/>
    <property type="match status" value="1"/>
</dbReference>
<dbReference type="SMART" id="SM00389">
    <property type="entry name" value="HOX"/>
    <property type="match status" value="1"/>
</dbReference>
<dbReference type="SMART" id="SM00724">
    <property type="entry name" value="TLC"/>
    <property type="match status" value="1"/>
</dbReference>
<dbReference type="SUPFAM" id="SSF46689">
    <property type="entry name" value="Homeodomain-like"/>
    <property type="match status" value="1"/>
</dbReference>
<dbReference type="PROSITE" id="PS50922">
    <property type="entry name" value="TLC"/>
    <property type="match status" value="1"/>
</dbReference>
<evidence type="ECO:0000250" key="1">
    <source>
        <dbReference type="UniProtKB" id="Q1A3B0"/>
    </source>
</evidence>
<evidence type="ECO:0000255" key="2"/>
<evidence type="ECO:0000255" key="3">
    <source>
        <dbReference type="PROSITE-ProRule" id="PRU00205"/>
    </source>
</evidence>
<evidence type="ECO:0000256" key="4">
    <source>
        <dbReference type="SAM" id="MobiDB-lite"/>
    </source>
</evidence>
<evidence type="ECO:0000269" key="5">
    <source>
    </source>
</evidence>
<evidence type="ECO:0000269" key="6">
    <source>
    </source>
</evidence>
<evidence type="ECO:0000269" key="7">
    <source>
    </source>
</evidence>
<evidence type="ECO:0000269" key="8">
    <source>
    </source>
</evidence>
<evidence type="ECO:0000269" key="9">
    <source>
    </source>
</evidence>
<evidence type="ECO:0000303" key="10">
    <source>
    </source>
</evidence>
<evidence type="ECO:0000305" key="11"/>
<evidence type="ECO:0000305" key="12">
    <source>
    </source>
</evidence>
<evidence type="ECO:0000312" key="13">
    <source>
        <dbReference type="HGNC" id="HGNC:23752"/>
    </source>
</evidence>
<comment type="function">
    <text evidence="6 7 8 9">Ceramide synthase that catalyzes the transfer of the acyl chain from acyl-CoA to a sphingoid base, with high selectivity toward very- and ultra-long-chain fatty acyl-CoA (chain length greater than C22) (PubMed:17977534, PubMed:22038835, PubMed:26887952). N-acylates sphinganine and sphingosine bases to form dihydroceramides and ceramides in de novo synthesis and salvage pathways, respectively (PubMed:17977534, PubMed:22038835, PubMed:26887952). It is crucial for the synthesis of ultra-long-chain ceramides in the epidermis, to maintain epidermal lipid homeostasis and terminal differentiation (PubMed:23754960).</text>
</comment>
<comment type="catalytic activity">
    <reaction evidence="6 7 9">
        <text>a very long-chain fatty acyl-CoA + a sphingoid base = an N-(very-long-chain fatty acyl)-sphingoid base + CoA + H(+)</text>
        <dbReference type="Rhea" id="RHEA:61480"/>
        <dbReference type="ChEBI" id="CHEBI:15378"/>
        <dbReference type="ChEBI" id="CHEBI:57287"/>
        <dbReference type="ChEBI" id="CHEBI:84410"/>
        <dbReference type="ChEBI" id="CHEBI:138261"/>
        <dbReference type="ChEBI" id="CHEBI:144712"/>
        <dbReference type="EC" id="2.3.1.297"/>
    </reaction>
</comment>
<comment type="catalytic activity">
    <reaction evidence="1">
        <text>docosanoyl-CoA + sphinganine = N-docosanoylsphinganine + CoA + H(+)</text>
        <dbReference type="Rhea" id="RHEA:36535"/>
        <dbReference type="ChEBI" id="CHEBI:15378"/>
        <dbReference type="ChEBI" id="CHEBI:57287"/>
        <dbReference type="ChEBI" id="CHEBI:57817"/>
        <dbReference type="ChEBI" id="CHEBI:65059"/>
        <dbReference type="ChEBI" id="CHEBI:67021"/>
    </reaction>
    <physiologicalReaction direction="left-to-right" evidence="1">
        <dbReference type="Rhea" id="RHEA:36536"/>
    </physiologicalReaction>
</comment>
<comment type="catalytic activity">
    <reaction evidence="6 9">
        <text>tetracosanoyl-CoA + sphinganine = N-tetracosanoylsphinganine + CoA + H(+)</text>
        <dbReference type="Rhea" id="RHEA:33591"/>
        <dbReference type="ChEBI" id="CHEBI:15378"/>
        <dbReference type="ChEBI" id="CHEBI:52961"/>
        <dbReference type="ChEBI" id="CHEBI:57287"/>
        <dbReference type="ChEBI" id="CHEBI:57817"/>
        <dbReference type="ChEBI" id="CHEBI:65052"/>
    </reaction>
    <physiologicalReaction direction="left-to-right" evidence="6 9">
        <dbReference type="Rhea" id="RHEA:33592"/>
    </physiologicalReaction>
</comment>
<comment type="catalytic activity">
    <reaction evidence="7">
        <text>hexacosanoyl-CoA + sphinganine = N-hexacosanoylsphinganine + CoA + H(+)</text>
        <dbReference type="Rhea" id="RHEA:33351"/>
        <dbReference type="ChEBI" id="CHEBI:15378"/>
        <dbReference type="ChEBI" id="CHEBI:52962"/>
        <dbReference type="ChEBI" id="CHEBI:57287"/>
        <dbReference type="ChEBI" id="CHEBI:57817"/>
        <dbReference type="ChEBI" id="CHEBI:64868"/>
    </reaction>
    <physiologicalReaction direction="left-to-right" evidence="7">
        <dbReference type="Rhea" id="RHEA:33352"/>
    </physiologicalReaction>
</comment>
<comment type="catalytic activity">
    <reaction evidence="1">
        <text>2-hydroxydocosanoyl-CoA + sphinganine = N-(2-hydroxydocosanoyl)-sphinganine + CoA + H(+)</text>
        <dbReference type="Rhea" id="RHEA:36619"/>
        <dbReference type="ChEBI" id="CHEBI:15378"/>
        <dbReference type="ChEBI" id="CHEBI:57287"/>
        <dbReference type="ChEBI" id="CHEBI:57817"/>
        <dbReference type="ChEBI" id="CHEBI:67023"/>
        <dbReference type="ChEBI" id="CHEBI:74117"/>
    </reaction>
    <physiologicalReaction direction="left-to-right" evidence="1">
        <dbReference type="Rhea" id="RHEA:36620"/>
    </physiologicalReaction>
</comment>
<comment type="catalytic activity">
    <reaction evidence="1">
        <text>2-hydroxytetracosanoyl-CoA + sphinganine = N-(2-hydroxytetracosanoyl)-sphinganine + CoA + H(+)</text>
        <dbReference type="Rhea" id="RHEA:36627"/>
        <dbReference type="ChEBI" id="CHEBI:15378"/>
        <dbReference type="ChEBI" id="CHEBI:52371"/>
        <dbReference type="ChEBI" id="CHEBI:57287"/>
        <dbReference type="ChEBI" id="CHEBI:57817"/>
        <dbReference type="ChEBI" id="CHEBI:74118"/>
    </reaction>
    <physiologicalReaction direction="left-to-right" evidence="1">
        <dbReference type="Rhea" id="RHEA:36628"/>
    </physiologicalReaction>
</comment>
<comment type="catalytic activity">
    <reaction evidence="7">
        <text>an ultra-long-chain fatty acyl-CoA + a sphingoid base = an N-(ultra-long-chain-acyl)-sphingoid base + CoA + H(+)</text>
        <dbReference type="Rhea" id="RHEA:61492"/>
        <dbReference type="ChEBI" id="CHEBI:15378"/>
        <dbReference type="ChEBI" id="CHEBI:57287"/>
        <dbReference type="ChEBI" id="CHEBI:84410"/>
        <dbReference type="ChEBI" id="CHEBI:143018"/>
        <dbReference type="ChEBI" id="CHEBI:144713"/>
        <dbReference type="EC" id="2.3.1.298"/>
    </reaction>
    <physiologicalReaction direction="left-to-right" evidence="7">
        <dbReference type="Rhea" id="RHEA:61493"/>
    </physiologicalReaction>
</comment>
<comment type="catalytic activity">
    <reaction evidence="7">
        <text>octacosanoyl-CoA + sphinganine = N-(octacosanoyl)-sphinganine + CoA + H(+)</text>
        <dbReference type="Rhea" id="RHEA:36675"/>
        <dbReference type="ChEBI" id="CHEBI:15378"/>
        <dbReference type="ChEBI" id="CHEBI:57287"/>
        <dbReference type="ChEBI" id="CHEBI:57817"/>
        <dbReference type="ChEBI" id="CHEBI:72019"/>
        <dbReference type="ChEBI" id="CHEBI:74141"/>
    </reaction>
    <physiologicalReaction direction="left-to-right" evidence="7">
        <dbReference type="Rhea" id="RHEA:36676"/>
    </physiologicalReaction>
</comment>
<comment type="catalytic activity">
    <reaction evidence="1">
        <text>a fatty acyl-CoA + sphing-4-enine = an N-acylsphing-4-enine + CoA + H(+)</text>
        <dbReference type="Rhea" id="RHEA:23768"/>
        <dbReference type="ChEBI" id="CHEBI:15378"/>
        <dbReference type="ChEBI" id="CHEBI:52639"/>
        <dbReference type="ChEBI" id="CHEBI:57287"/>
        <dbReference type="ChEBI" id="CHEBI:57756"/>
        <dbReference type="ChEBI" id="CHEBI:77636"/>
        <dbReference type="EC" id="2.3.1.24"/>
    </reaction>
    <physiologicalReaction direction="left-to-right" evidence="1">
        <dbReference type="Rhea" id="RHEA:23769"/>
    </physiologicalReaction>
</comment>
<comment type="catalytic activity">
    <reaction evidence="1">
        <text>sphinganine + octadecanoyl-CoA = N-(octadecanoyl)-sphinganine + CoA + H(+)</text>
        <dbReference type="Rhea" id="RHEA:36547"/>
        <dbReference type="ChEBI" id="CHEBI:15378"/>
        <dbReference type="ChEBI" id="CHEBI:57287"/>
        <dbReference type="ChEBI" id="CHEBI:57394"/>
        <dbReference type="ChEBI" id="CHEBI:57817"/>
        <dbReference type="ChEBI" id="CHEBI:67033"/>
    </reaction>
    <physiologicalReaction direction="left-to-right" evidence="1">
        <dbReference type="Rhea" id="RHEA:36548"/>
    </physiologicalReaction>
</comment>
<comment type="catalytic activity">
    <reaction evidence="1">
        <text>2-hydroxyoctadecanoyl-CoA + sphinganine = N-(2-hydroxyoctadecanoyl)-sphinganine + CoA + H(+)</text>
        <dbReference type="Rhea" id="RHEA:36615"/>
        <dbReference type="ChEBI" id="CHEBI:15378"/>
        <dbReference type="ChEBI" id="CHEBI:57287"/>
        <dbReference type="ChEBI" id="CHEBI:57817"/>
        <dbReference type="ChEBI" id="CHEBI:67034"/>
        <dbReference type="ChEBI" id="CHEBI:74116"/>
    </reaction>
    <physiologicalReaction direction="left-to-right" evidence="1">
        <dbReference type="Rhea" id="RHEA:36616"/>
    </physiologicalReaction>
</comment>
<comment type="biophysicochemical properties">
    <kinetics>
        <KM evidence="6">1.7 uM for sphinganine</KM>
    </kinetics>
</comment>
<comment type="pathway">
    <text evidence="6 7 9">Lipid metabolism; sphingolipid metabolism.</text>
</comment>
<comment type="interaction">
    <interactant intactId="EBI-18202821">
        <id>Q8IU89</id>
    </interactant>
    <interactant intactId="EBI-721517">
        <id>Q99519</id>
        <label>NEU1</label>
    </interactant>
    <organismsDiffer>false</organismsDiffer>
    <experiments>3</experiments>
</comment>
<comment type="interaction">
    <interactant intactId="EBI-18202821">
        <id>Q8IU89</id>
    </interactant>
    <interactant intactId="EBI-721750">
        <id>Q8N138</id>
        <label>ORMDL3</label>
    </interactant>
    <organismsDiffer>false</organismsDiffer>
    <experiments>3</experiments>
</comment>
<comment type="interaction">
    <interactant intactId="EBI-18202821">
        <id>Q8IU89</id>
    </interactant>
    <interactant intactId="EBI-634289">
        <id>Q9H0N5</id>
        <label>PCBD2</label>
    </interactant>
    <organismsDiffer>false</organismsDiffer>
    <experiments>3</experiments>
</comment>
<comment type="interaction">
    <interactant intactId="EBI-18202821">
        <id>Q8IU89</id>
    </interactant>
    <interactant intactId="EBI-2823239">
        <id>Q9NUM3</id>
        <label>SLC39A9</label>
    </interactant>
    <organismsDiffer>false</organismsDiffer>
    <experiments>3</experiments>
</comment>
<comment type="interaction">
    <interactant intactId="EBI-18202821">
        <id>Q8IU89</id>
    </interactant>
    <interactant intactId="EBI-2857623">
        <id>Q96FB2</id>
    </interactant>
    <organismsDiffer>false</organismsDiffer>
    <experiments>3</experiments>
</comment>
<comment type="subcellular location">
    <subcellularLocation>
        <location evidence="1">Endoplasmic reticulum membrane</location>
        <topology evidence="2">Multi-pass membrane protein</topology>
    </subcellularLocation>
</comment>
<comment type="tissue specificity">
    <text evidence="8">Expressed in the epidermis, where it localizes at the interface between the stratum granulosum and the stratum corneum (at protein level).</text>
</comment>
<comment type="disease" evidence="8">
    <disease id="DI-03828">
        <name>Ichthyosis, congenital, autosomal recessive 9</name>
        <acronym>ARCI9</acronym>
        <description>A form of autosomal recessive congenital ichthyosis, a disorder of keratinization with abnormal differentiation and desquamation of the epidermis, resulting in abnormal skin scaling over the whole body. The main skin phenotypes are lamellar ichthyosis (LI) and non-bullous congenital ichthyosiform erythroderma (NCIE), although phenotypic overlap within the same patient or among patients from the same family can occur. Lamellar ichthyosis is a condition often associated with an embedment in a collodion-like membrane at birth; skin scales later develop, covering the entire body surface. Non-bullous congenital ichthyosiform erythroderma characterized by fine whitish scaling on an erythrodermal background; larger brownish scales are present on the buttocks, neck and legs.</description>
        <dbReference type="MIM" id="615023"/>
    </disease>
    <text>The disease is caused by variants affecting the gene represented in this entry.</text>
</comment>
<comment type="caution">
    <text evidence="1 11">Contains a predicted homeobox domain which is degenerated, lacking residues important for DNA-binding. Moreover, the protein localizes in the endoplasmic reticulum and not in the nucleus, which also argues against homeobox function (By similarity).</text>
</comment>
<keyword id="KW-0256">Endoplasmic reticulum</keyword>
<keyword id="KW-0977">Ichthyosis</keyword>
<keyword id="KW-0444">Lipid biosynthesis</keyword>
<keyword id="KW-0443">Lipid metabolism</keyword>
<keyword id="KW-0472">Membrane</keyword>
<keyword id="KW-0597">Phosphoprotein</keyword>
<keyword id="KW-1267">Proteomics identification</keyword>
<keyword id="KW-1185">Reference proteome</keyword>
<keyword id="KW-0808">Transferase</keyword>
<keyword id="KW-0812">Transmembrane</keyword>
<keyword id="KW-1133">Transmembrane helix</keyword>
<feature type="chain" id="PRO_0000185511" description="Ceramide synthase 3">
    <location>
        <begin position="1"/>
        <end position="383"/>
    </location>
</feature>
<feature type="transmembrane region" description="Helical" evidence="2">
    <location>
        <begin position="32"/>
        <end position="52"/>
    </location>
</feature>
<feature type="transmembrane region" description="Helical" evidence="2">
    <location>
        <begin position="139"/>
        <end position="159"/>
    </location>
</feature>
<feature type="transmembrane region" description="Helical" evidence="2">
    <location>
        <begin position="174"/>
        <end position="194"/>
    </location>
</feature>
<feature type="transmembrane region" description="Helical" evidence="2">
    <location>
        <begin position="205"/>
        <end position="225"/>
    </location>
</feature>
<feature type="transmembrane region" description="Helical" evidence="2">
    <location>
        <begin position="264"/>
        <end position="284"/>
    </location>
</feature>
<feature type="transmembrane region" description="Helical" evidence="2">
    <location>
        <begin position="298"/>
        <end position="318"/>
    </location>
</feature>
<feature type="topological domain" description="Cytoplasmic" evidence="12">
    <location>
        <begin position="319"/>
        <end position="383"/>
    </location>
</feature>
<feature type="domain" description="TLC" evidence="3">
    <location>
        <begin position="130"/>
        <end position="331"/>
    </location>
</feature>
<feature type="region of interest" description="Homeobox-like" evidence="11">
    <location>
        <begin position="66"/>
        <end position="127"/>
    </location>
</feature>
<feature type="region of interest" description="Disordered" evidence="4">
    <location>
        <begin position="342"/>
        <end position="363"/>
    </location>
</feature>
<feature type="compositionally biased region" description="Acidic residues" evidence="4">
    <location>
        <begin position="342"/>
        <end position="355"/>
    </location>
</feature>
<feature type="modified residue" description="Phosphoserine" evidence="12">
    <location>
        <position position="340"/>
    </location>
</feature>
<feature type="sequence variant" id="VAR_061847" description="In dbSNP:rs60405735.">
    <original>Y</original>
    <variation>C</variation>
    <location>
        <position position="45"/>
    </location>
</feature>
<feature type="sequence variant" id="VAR_057276" description="In dbSNP:rs1023783.">
    <original>D</original>
    <variation>G</variation>
    <location>
        <position position="342"/>
    </location>
</feature>
<feature type="sequence variant" id="VAR_019328" description="In dbSNP:rs2439928." evidence="5">
    <original>R</original>
    <variation>G</variation>
    <location>
        <position position="370"/>
    </location>
</feature>
<feature type="mutagenesis site" description="Decreased phosphorylation." evidence="9">
    <original>S</original>
    <variation>A</variation>
    <location>
        <position position="340"/>
    </location>
</feature>
<feature type="sequence conflict" description="In Ref. 2; AAH34500." evidence="11" ref="2">
    <location>
        <position position="144"/>
    </location>
</feature>
<feature type="sequence conflict" description="In Ref. 2; AAH28703." evidence="11" ref="2">
    <original>L</original>
    <variation>R</variation>
    <location>
        <position position="316"/>
    </location>
</feature>
<sequence length="383" mass="46316">MFWTFKEWFWLERFWLPPTIKWSDLEDHDGLVFVKPSHLYVTIPYAFLLLIIRRVFEKFVASPLAKSFGIKETVRKVTPNTVLENFFKHSTRQPLQTDIYGLAKKCNLTERQVERWFRSRRNQERPSRLKKFQEACWRFAFYLMITVAGIAFLYDKPWLYDLWEVWNGYPKQPLLPSQYWYYILEMSFYWSLLFRLGFDVKRKDFLAHIIHHLAAISLMSFSWCANYIRSGTLVMIVHDVADIWLESAKMFSYAGWTQTCNTLFFIFSTIFFISRLIVFPFWILYCTLILPMYHLEPFFSYIFLNLQLMILQVLHLYWGYYILKMLNRCIFMKSIQDVRSDDEDYEEEEEEEEEEATKGKEMDCLKNGLRAERHLIPNGQHGH</sequence>
<organism>
    <name type="scientific">Homo sapiens</name>
    <name type="common">Human</name>
    <dbReference type="NCBI Taxonomy" id="9606"/>
    <lineage>
        <taxon>Eukaryota</taxon>
        <taxon>Metazoa</taxon>
        <taxon>Chordata</taxon>
        <taxon>Craniata</taxon>
        <taxon>Vertebrata</taxon>
        <taxon>Euteleostomi</taxon>
        <taxon>Mammalia</taxon>
        <taxon>Eutheria</taxon>
        <taxon>Euarchontoglires</taxon>
        <taxon>Primates</taxon>
        <taxon>Haplorrhini</taxon>
        <taxon>Catarrhini</taxon>
        <taxon>Hominidae</taxon>
        <taxon>Homo</taxon>
    </lineage>
</organism>
<proteinExistence type="evidence at protein level"/>
<accession>Q8IU89</accession>
<accession>Q8NE64</accession>
<accession>Q8NEN6</accession>
<reference key="1">
    <citation type="journal article" date="2006" name="Nature">
        <title>Analysis of the DNA sequence and duplication history of human chromosome 15.</title>
        <authorList>
            <person name="Zody M.C."/>
            <person name="Garber M."/>
            <person name="Sharpe T."/>
            <person name="Young S.K."/>
            <person name="Rowen L."/>
            <person name="O'Neill K."/>
            <person name="Whittaker C.A."/>
            <person name="Kamal M."/>
            <person name="Chang J.L."/>
            <person name="Cuomo C.A."/>
            <person name="Dewar K."/>
            <person name="FitzGerald M.G."/>
            <person name="Kodira C.D."/>
            <person name="Madan A."/>
            <person name="Qin S."/>
            <person name="Yang X."/>
            <person name="Abbasi N."/>
            <person name="Abouelleil A."/>
            <person name="Arachchi H.M."/>
            <person name="Baradarani L."/>
            <person name="Birditt B."/>
            <person name="Bloom S."/>
            <person name="Bloom T."/>
            <person name="Borowsky M.L."/>
            <person name="Burke J."/>
            <person name="Butler J."/>
            <person name="Cook A."/>
            <person name="DeArellano K."/>
            <person name="DeCaprio D."/>
            <person name="Dorris L. III"/>
            <person name="Dors M."/>
            <person name="Eichler E.E."/>
            <person name="Engels R."/>
            <person name="Fahey J."/>
            <person name="Fleetwood P."/>
            <person name="Friedman C."/>
            <person name="Gearin G."/>
            <person name="Hall J.L."/>
            <person name="Hensley G."/>
            <person name="Johnson E."/>
            <person name="Jones C."/>
            <person name="Kamat A."/>
            <person name="Kaur A."/>
            <person name="Locke D.P."/>
            <person name="Madan A."/>
            <person name="Munson G."/>
            <person name="Jaffe D.B."/>
            <person name="Lui A."/>
            <person name="Macdonald P."/>
            <person name="Mauceli E."/>
            <person name="Naylor J.W."/>
            <person name="Nesbitt R."/>
            <person name="Nicol R."/>
            <person name="O'Leary S.B."/>
            <person name="Ratcliffe A."/>
            <person name="Rounsley S."/>
            <person name="She X."/>
            <person name="Sneddon K.M.B."/>
            <person name="Stewart S."/>
            <person name="Sougnez C."/>
            <person name="Stone S.M."/>
            <person name="Topham K."/>
            <person name="Vincent D."/>
            <person name="Wang S."/>
            <person name="Zimmer A.R."/>
            <person name="Birren B.W."/>
            <person name="Hood L."/>
            <person name="Lander E.S."/>
            <person name="Nusbaum C."/>
        </authorList>
    </citation>
    <scope>NUCLEOTIDE SEQUENCE [LARGE SCALE GENOMIC DNA]</scope>
</reference>
<reference key="2">
    <citation type="journal article" date="2004" name="Genome Res.">
        <title>The status, quality, and expansion of the NIH full-length cDNA project: the Mammalian Gene Collection (MGC).</title>
        <authorList>
            <consortium name="The MGC Project Team"/>
        </authorList>
    </citation>
    <scope>NUCLEOTIDE SEQUENCE [LARGE SCALE MRNA]</scope>
    <scope>VARIANT GLY-370</scope>
    <source>
        <tissue>Testis</tissue>
    </source>
</reference>
<reference key="3">
    <citation type="journal article" date="2007" name="FEBS Lett.">
        <title>Kinetic characterization of mammalian ceramide synthases: determination of K(m) values towards sphinganine.</title>
        <authorList>
            <person name="Lahiri S."/>
            <person name="Lee H."/>
            <person name="Mesicek J."/>
            <person name="Fuks Z."/>
            <person name="Haimovitz-Friedman A."/>
            <person name="Kolesnick R.N."/>
            <person name="Futerman A.H."/>
        </authorList>
    </citation>
    <scope>FUNCTION</scope>
    <scope>CATALYTIC ACTIVITY</scope>
    <scope>PATHWAY</scope>
    <scope>BIOPHYSICOCHEMICAL PROPERTIES</scope>
</reference>
<reference key="4">
    <citation type="journal article" date="2012" name="Hum. Mol. Genet.">
        <title>Loss of ceramide synthase 3 causes lethal skin barrier disruption.</title>
        <authorList>
            <person name="Jennemann R."/>
            <person name="Rabionet M."/>
            <person name="Gorgas K."/>
            <person name="Epstein S."/>
            <person name="Dalpke A."/>
            <person name="Rothermel U."/>
            <person name="Bayerle A."/>
            <person name="van der Hoeven F."/>
            <person name="Imgrund S."/>
            <person name="Kirsch J."/>
            <person name="Nickel W."/>
            <person name="Willecke K."/>
            <person name="Riezman H."/>
            <person name="Groene H.J."/>
            <person name="Sandhoff R."/>
        </authorList>
    </citation>
    <scope>FUNCTION</scope>
    <scope>CATALYTIC ACTIVITY</scope>
    <scope>PATHWAY</scope>
</reference>
<reference key="5">
    <citation type="journal article" date="2013" name="PLoS Genet.">
        <title>Mutations in CERS3 cause autosomal recessive congenital ichthyosis in humans.</title>
        <authorList>
            <person name="Radner F.P."/>
            <person name="Marrakchi S."/>
            <person name="Kirchmeier P."/>
            <person name="Kim G.J."/>
            <person name="Ribierre F."/>
            <person name="Kamoun B."/>
            <person name="Abid L."/>
            <person name="Leipoldt M."/>
            <person name="Turki H."/>
            <person name="Schempp W."/>
            <person name="Heilig R."/>
            <person name="Lathrop M."/>
            <person name="Fischer J."/>
        </authorList>
    </citation>
    <scope>FUNCTION</scope>
    <scope>TISSUE SPECIFICITY</scope>
    <scope>INVOLVEMENT IN ARCI9</scope>
</reference>
<reference key="6">
    <citation type="journal article" date="2016" name="J. Biol. Chem.">
        <title>Enzyme activities of the ceramide synthases CERS2-6 are regulated by phosphorylation in the C-terminal region.</title>
        <authorList>
            <person name="Sassa T."/>
            <person name="Hirayama T."/>
            <person name="Kihara A."/>
        </authorList>
    </citation>
    <scope>FUNCTION</scope>
    <scope>CATALYTIC ACTIVITY</scope>
    <scope>PATHWAY</scope>
    <scope>TOPOLOGY</scope>
    <scope>PHOSPHORYLATION AT SER-340</scope>
    <scope>MUTAGENESIS OF SER-340</scope>
</reference>
<name>CERS3_HUMAN</name>
<gene>
    <name evidence="10 13" type="primary">CERS3</name>
    <name evidence="1" type="synonym">LASS3</name>
</gene>
<protein>
    <recommendedName>
        <fullName evidence="10">Ceramide synthase 3</fullName>
        <shortName evidence="10">CerS3</shortName>
    </recommendedName>
    <alternativeName>
        <fullName evidence="11">Dihydroceramide synthase 3</fullName>
    </alternativeName>
    <alternativeName>
        <fullName evidence="1">LAG1 longevity assurance homolog 3</fullName>
    </alternativeName>
    <alternativeName>
        <fullName evidence="11">Sphingosine N-acyltransferase CERS3</fullName>
        <ecNumber evidence="1">2.3.1.24</ecNumber>
    </alternativeName>
    <alternativeName>
        <fullName evidence="11">Ultra-long-chain ceramide synthase CERS3</fullName>
        <ecNumber evidence="7">2.3.1.298</ecNumber>
    </alternativeName>
    <alternativeName>
        <fullName evidence="11">Very-long-chain ceramide synthase CERS3</fullName>
        <ecNumber evidence="6 7 9">2.3.1.297</ecNumber>
    </alternativeName>
</protein>